<reference key="1">
    <citation type="journal article" date="2009" name="PLoS Biol.">
        <title>Lineage-specific biology revealed by a finished genome assembly of the mouse.</title>
        <authorList>
            <person name="Church D.M."/>
            <person name="Goodstadt L."/>
            <person name="Hillier L.W."/>
            <person name="Zody M.C."/>
            <person name="Goldstein S."/>
            <person name="She X."/>
            <person name="Bult C.J."/>
            <person name="Agarwala R."/>
            <person name="Cherry J.L."/>
            <person name="DiCuccio M."/>
            <person name="Hlavina W."/>
            <person name="Kapustin Y."/>
            <person name="Meric P."/>
            <person name="Maglott D."/>
            <person name="Birtle Z."/>
            <person name="Marques A.C."/>
            <person name="Graves T."/>
            <person name="Zhou S."/>
            <person name="Teague B."/>
            <person name="Potamousis K."/>
            <person name="Churas C."/>
            <person name="Place M."/>
            <person name="Herschleb J."/>
            <person name="Runnheim R."/>
            <person name="Forrest D."/>
            <person name="Amos-Landgraf J."/>
            <person name="Schwartz D.C."/>
            <person name="Cheng Z."/>
            <person name="Lindblad-Toh K."/>
            <person name="Eichler E.E."/>
            <person name="Ponting C.P."/>
        </authorList>
    </citation>
    <scope>NUCLEOTIDE SEQUENCE [LARGE SCALE GENOMIC DNA]</scope>
    <source>
        <strain>C57BL/6J</strain>
    </source>
</reference>
<reference key="2">
    <citation type="journal article" date="2004" name="Genome Res.">
        <title>The status, quality, and expansion of the NIH full-length cDNA project: the Mammalian Gene Collection (MGC).</title>
        <authorList>
            <consortium name="The MGC Project Team"/>
        </authorList>
    </citation>
    <scope>NUCLEOTIDE SEQUENCE [LARGE SCALE MRNA] OF 556-1320 (ISOFORM 1)</scope>
    <scope>NUCLEOTIDE SEQUENCE [LARGE SCALE MRNA] OF 1131-1320 (ISOFORM 2)</scope>
    <source>
        <strain>C57BL/6J</strain>
        <tissue>Eye</tissue>
        <tissue>Retina</tissue>
    </source>
</reference>
<reference key="3">
    <citation type="journal article" date="2005" name="Science">
        <title>The transcriptional landscape of the mammalian genome.</title>
        <authorList>
            <person name="Carninci P."/>
            <person name="Kasukawa T."/>
            <person name="Katayama S."/>
            <person name="Gough J."/>
            <person name="Frith M.C."/>
            <person name="Maeda N."/>
            <person name="Oyama R."/>
            <person name="Ravasi T."/>
            <person name="Lenhard B."/>
            <person name="Wells C."/>
            <person name="Kodzius R."/>
            <person name="Shimokawa K."/>
            <person name="Bajic V.B."/>
            <person name="Brenner S.E."/>
            <person name="Batalov S."/>
            <person name="Forrest A.R."/>
            <person name="Zavolan M."/>
            <person name="Davis M.J."/>
            <person name="Wilming L.G."/>
            <person name="Aidinis V."/>
            <person name="Allen J.E."/>
            <person name="Ambesi-Impiombato A."/>
            <person name="Apweiler R."/>
            <person name="Aturaliya R.N."/>
            <person name="Bailey T.L."/>
            <person name="Bansal M."/>
            <person name="Baxter L."/>
            <person name="Beisel K.W."/>
            <person name="Bersano T."/>
            <person name="Bono H."/>
            <person name="Chalk A.M."/>
            <person name="Chiu K.P."/>
            <person name="Choudhary V."/>
            <person name="Christoffels A."/>
            <person name="Clutterbuck D.R."/>
            <person name="Crowe M.L."/>
            <person name="Dalla E."/>
            <person name="Dalrymple B.P."/>
            <person name="de Bono B."/>
            <person name="Della Gatta G."/>
            <person name="di Bernardo D."/>
            <person name="Down T."/>
            <person name="Engstrom P."/>
            <person name="Fagiolini M."/>
            <person name="Faulkner G."/>
            <person name="Fletcher C.F."/>
            <person name="Fukushima T."/>
            <person name="Furuno M."/>
            <person name="Futaki S."/>
            <person name="Gariboldi M."/>
            <person name="Georgii-Hemming P."/>
            <person name="Gingeras T.R."/>
            <person name="Gojobori T."/>
            <person name="Green R.E."/>
            <person name="Gustincich S."/>
            <person name="Harbers M."/>
            <person name="Hayashi Y."/>
            <person name="Hensch T.K."/>
            <person name="Hirokawa N."/>
            <person name="Hill D."/>
            <person name="Huminiecki L."/>
            <person name="Iacono M."/>
            <person name="Ikeo K."/>
            <person name="Iwama A."/>
            <person name="Ishikawa T."/>
            <person name="Jakt M."/>
            <person name="Kanapin A."/>
            <person name="Katoh M."/>
            <person name="Kawasawa Y."/>
            <person name="Kelso J."/>
            <person name="Kitamura H."/>
            <person name="Kitano H."/>
            <person name="Kollias G."/>
            <person name="Krishnan S.P."/>
            <person name="Kruger A."/>
            <person name="Kummerfeld S.K."/>
            <person name="Kurochkin I.V."/>
            <person name="Lareau L.F."/>
            <person name="Lazarevic D."/>
            <person name="Lipovich L."/>
            <person name="Liu J."/>
            <person name="Liuni S."/>
            <person name="McWilliam S."/>
            <person name="Madan Babu M."/>
            <person name="Madera M."/>
            <person name="Marchionni L."/>
            <person name="Matsuda H."/>
            <person name="Matsuzawa S."/>
            <person name="Miki H."/>
            <person name="Mignone F."/>
            <person name="Miyake S."/>
            <person name="Morris K."/>
            <person name="Mottagui-Tabar S."/>
            <person name="Mulder N."/>
            <person name="Nakano N."/>
            <person name="Nakauchi H."/>
            <person name="Ng P."/>
            <person name="Nilsson R."/>
            <person name="Nishiguchi S."/>
            <person name="Nishikawa S."/>
            <person name="Nori F."/>
            <person name="Ohara O."/>
            <person name="Okazaki Y."/>
            <person name="Orlando V."/>
            <person name="Pang K.C."/>
            <person name="Pavan W.J."/>
            <person name="Pavesi G."/>
            <person name="Pesole G."/>
            <person name="Petrovsky N."/>
            <person name="Piazza S."/>
            <person name="Reed J."/>
            <person name="Reid J.F."/>
            <person name="Ring B.Z."/>
            <person name="Ringwald M."/>
            <person name="Rost B."/>
            <person name="Ruan Y."/>
            <person name="Salzberg S.L."/>
            <person name="Sandelin A."/>
            <person name="Schneider C."/>
            <person name="Schoenbach C."/>
            <person name="Sekiguchi K."/>
            <person name="Semple C.A."/>
            <person name="Seno S."/>
            <person name="Sessa L."/>
            <person name="Sheng Y."/>
            <person name="Shibata Y."/>
            <person name="Shimada H."/>
            <person name="Shimada K."/>
            <person name="Silva D."/>
            <person name="Sinclair B."/>
            <person name="Sperling S."/>
            <person name="Stupka E."/>
            <person name="Sugiura K."/>
            <person name="Sultana R."/>
            <person name="Takenaka Y."/>
            <person name="Taki K."/>
            <person name="Tammoja K."/>
            <person name="Tan S.L."/>
            <person name="Tang S."/>
            <person name="Taylor M.S."/>
            <person name="Tegner J."/>
            <person name="Teichmann S.A."/>
            <person name="Ueda H.R."/>
            <person name="van Nimwegen E."/>
            <person name="Verardo R."/>
            <person name="Wei C.L."/>
            <person name="Yagi K."/>
            <person name="Yamanishi H."/>
            <person name="Zabarovsky E."/>
            <person name="Zhu S."/>
            <person name="Zimmer A."/>
            <person name="Hide W."/>
            <person name="Bult C."/>
            <person name="Grimmond S.M."/>
            <person name="Teasdale R.D."/>
            <person name="Liu E.T."/>
            <person name="Brusic V."/>
            <person name="Quackenbush J."/>
            <person name="Wahlestedt C."/>
            <person name="Mattick J.S."/>
            <person name="Hume D.A."/>
            <person name="Kai C."/>
            <person name="Sasaki D."/>
            <person name="Tomaru Y."/>
            <person name="Fukuda S."/>
            <person name="Kanamori-Katayama M."/>
            <person name="Suzuki M."/>
            <person name="Aoki J."/>
            <person name="Arakawa T."/>
            <person name="Iida J."/>
            <person name="Imamura K."/>
            <person name="Itoh M."/>
            <person name="Kato T."/>
            <person name="Kawaji H."/>
            <person name="Kawagashira N."/>
            <person name="Kawashima T."/>
            <person name="Kojima M."/>
            <person name="Kondo S."/>
            <person name="Konno H."/>
            <person name="Nakano K."/>
            <person name="Ninomiya N."/>
            <person name="Nishio T."/>
            <person name="Okada M."/>
            <person name="Plessy C."/>
            <person name="Shibata K."/>
            <person name="Shiraki T."/>
            <person name="Suzuki S."/>
            <person name="Tagami M."/>
            <person name="Waki K."/>
            <person name="Watahiki A."/>
            <person name="Okamura-Oho Y."/>
            <person name="Suzuki H."/>
            <person name="Kawai J."/>
            <person name="Hayashizaki Y."/>
        </authorList>
    </citation>
    <scope>NUCLEOTIDE SEQUENCE [LARGE SCALE MRNA] OF 1159-1320 (ISOFORM 1)</scope>
    <source>
        <strain>C57BL/6J</strain>
        <tissue>Testis</tissue>
    </source>
</reference>
<protein>
    <recommendedName>
        <fullName>Collagen alpha-1(XX) chain</fullName>
    </recommendedName>
</protein>
<evidence type="ECO:0000255" key="1"/>
<evidence type="ECO:0000255" key="2">
    <source>
        <dbReference type="PROSITE-ProRule" id="PRU00219"/>
    </source>
</evidence>
<evidence type="ECO:0000255" key="3">
    <source>
        <dbReference type="PROSITE-ProRule" id="PRU00316"/>
    </source>
</evidence>
<evidence type="ECO:0000256" key="4">
    <source>
        <dbReference type="SAM" id="MobiDB-lite"/>
    </source>
</evidence>
<evidence type="ECO:0000303" key="5">
    <source>
    </source>
</evidence>
<evidence type="ECO:0000305" key="6"/>
<proteinExistence type="evidence at transcript level"/>
<organism>
    <name type="scientific">Mus musculus</name>
    <name type="common">Mouse</name>
    <dbReference type="NCBI Taxonomy" id="10090"/>
    <lineage>
        <taxon>Eukaryota</taxon>
        <taxon>Metazoa</taxon>
        <taxon>Chordata</taxon>
        <taxon>Craniata</taxon>
        <taxon>Vertebrata</taxon>
        <taxon>Euteleostomi</taxon>
        <taxon>Mammalia</taxon>
        <taxon>Eutheria</taxon>
        <taxon>Euarchontoglires</taxon>
        <taxon>Glires</taxon>
        <taxon>Rodentia</taxon>
        <taxon>Myomorpha</taxon>
        <taxon>Muroidea</taxon>
        <taxon>Muridae</taxon>
        <taxon>Murinae</taxon>
        <taxon>Mus</taxon>
        <taxon>Mus</taxon>
    </lineage>
</organism>
<name>COKA1_MOUSE</name>
<sequence>MSLQGSYQHFCLWMFLGTTLALGQGQVSSRLRLAVLPEDQLQMKWREAEGSGLGFLVQVTPMAGDLEQELILTTKTPKATVGGLNPSKSYTLQIFELTDSGPILLARREFVIEDLKSQSLGRGSRRLAGATLEPTSLPLRGPDSEKTSEPSIAFTLSRDLPILDHPQFQCTPPTPADIIFLVDGSWSIGHNHFQQVKDFLASIITQFAIGPDKVQVGLTQYSGDPQTEWDLNSFQTKEQVLAAVHHLRYKGGNTFTGLALTHVLEQNLKPAAGVRPEAAKVLILVTDGKSQDDVRTAARILKDQDIDVFVVGVKNVDEAELKLLASQPLDITVHNVLDFPQLDTLAPLLSRLICQKIQGRGPVKPAAGTRVLDPLPTPTRLILTHATSSSIHLSWTPALYPPLKYLIVWQPSRGGAPKEVVVEGPVSSMELGNLTSSTEYLVSVLPVYESGVGKSLQGRATTAPLPPPGPLTLAAVTPRTLHVTWPPSAGVTQYLVQYLLATSTGEEQKREVHVGQPEVLLDGLEPGQDYDVSVQSLRGPEASEVQSIRARTSALGPPRHLTFSDVRYNSTCVSWEAQRPVRLVKVSYISSDGSHSGQTQVPGNLTSATLGPLSSSTMYTVRVTCFYLGGGSSVLTGHVTTQKAPSPGQLSVMELPGDAVKLSWLATALSGVLVYQIKWMPLGEGKAREISVPGTLGTATLPGLMKHVEYEITILAYYRDGTRSDPVSLRYTPSAASRSPPSSLALSSETPNSLQVNWTPPSGHVLHYRLNYTLASGSGPEKSISVPGTRSHAVLRDLMSATKYRVLVSAVYRAGESMAVSATYRTAACPALHPDSSLSGFDLMVAFGLVAKEYASIRGVAMEPSALGVVPTFTLFKDAQLMRRVSDIYPATLPPEHTIVFLVRLLPETPREAFALWQMMAEDFQPILGVLLDAGRKSLTYFNHDSRAALQEVTFDLQDAKKIFFGSFHKVHIAVGHSKVRLYVDCRKVAERPIGDAGSPPTGGFITLGRLAKARGPRSSSATFQLQMLQIVCSDTWADKDRCCEIPALRDGETCPAFPSACAYSSETPGPPGPQGPPGLPGRNGPPGQQGHPGPKGEPGPPGQTGPEGPGGQQGSPGTQGRAVQGPMGPPGAKGEKGDQGLSGLQGLSGQQGIPGKTGLQGPKGMRGLEGPAGLPGPPGPRGFQGLAGARGTNGERGAPGAVGPTGLPGSKGERGEKGEPQSLATIFQLVSQACESAIRTHVLKLNSFLHENARPPMPFMAETAKLGRPRSIDPGLHNEALLPGDWGHILRPEDQGEPVTISHTSNPRLQEVQTPESLE</sequence>
<keyword id="KW-0025">Alternative splicing</keyword>
<keyword id="KW-0176">Collagen</keyword>
<keyword id="KW-0325">Glycoprotein</keyword>
<keyword id="KW-1185">Reference proteome</keyword>
<keyword id="KW-0677">Repeat</keyword>
<keyword id="KW-0964">Secreted</keyword>
<keyword id="KW-0732">Signal</keyword>
<gene>
    <name type="primary">Col20a1</name>
</gene>
<accession>Q923P0</accession>
<accession>A8WIS2</accession>
<accession>Q91WC4</accession>
<accession>Q923P1</accession>
<accession>Q923P2</accession>
<accession>Q9D9L7</accession>
<feature type="signal peptide" evidence="1">
    <location>
        <begin position="1"/>
        <end position="25"/>
    </location>
</feature>
<feature type="chain" id="PRO_0000393005" description="Collagen alpha-1(XX) chain">
    <location>
        <begin position="26"/>
        <end position="1320"/>
    </location>
</feature>
<feature type="domain" description="Fibronectin type-III 1" evidence="3">
    <location>
        <begin position="27"/>
        <end position="118"/>
    </location>
</feature>
<feature type="domain" description="VWFA" evidence="2">
    <location>
        <begin position="177"/>
        <end position="352"/>
    </location>
</feature>
<feature type="domain" description="Fibronectin type-III 2" evidence="3">
    <location>
        <begin position="377"/>
        <end position="466"/>
    </location>
</feature>
<feature type="domain" description="Fibronectin type-III 3" evidence="3">
    <location>
        <begin position="467"/>
        <end position="556"/>
    </location>
</feature>
<feature type="domain" description="Fibronectin type-III 4" evidence="3">
    <location>
        <begin position="557"/>
        <end position="644"/>
    </location>
</feature>
<feature type="domain" description="Fibronectin type-III 5" evidence="3">
    <location>
        <begin position="646"/>
        <end position="735"/>
    </location>
</feature>
<feature type="domain" description="Fibronectin type-III 6" evidence="3">
    <location>
        <begin position="740"/>
        <end position="831"/>
    </location>
</feature>
<feature type="domain" description="Laminin G-like">
    <location>
        <begin position="840"/>
        <end position="1035"/>
    </location>
</feature>
<feature type="domain" description="Collagen-like 1">
    <location>
        <begin position="1069"/>
        <end position="1122"/>
    </location>
</feature>
<feature type="domain" description="Collagen-like 2">
    <location>
        <begin position="1125"/>
        <end position="1174"/>
    </location>
</feature>
<feature type="domain" description="Collagen-like 3">
    <location>
        <begin position="1165"/>
        <end position="1221"/>
    </location>
</feature>
<feature type="region of interest" description="Disordered" evidence="4">
    <location>
        <begin position="728"/>
        <end position="752"/>
    </location>
</feature>
<feature type="region of interest" description="Disordered" evidence="4">
    <location>
        <begin position="1064"/>
        <end position="1220"/>
    </location>
</feature>
<feature type="region of interest" description="Disordered" evidence="4">
    <location>
        <begin position="1291"/>
        <end position="1320"/>
    </location>
</feature>
<feature type="compositionally biased region" description="Low complexity" evidence="4">
    <location>
        <begin position="733"/>
        <end position="748"/>
    </location>
</feature>
<feature type="compositionally biased region" description="Pro residues" evidence="4">
    <location>
        <begin position="1069"/>
        <end position="1080"/>
    </location>
</feature>
<feature type="compositionally biased region" description="Low complexity" evidence="4">
    <location>
        <begin position="1081"/>
        <end position="1093"/>
    </location>
</feature>
<feature type="compositionally biased region" description="Gly residues" evidence="4">
    <location>
        <begin position="1106"/>
        <end position="1115"/>
    </location>
</feature>
<feature type="compositionally biased region" description="Low complexity" evidence="4">
    <location>
        <begin position="1140"/>
        <end position="1152"/>
    </location>
</feature>
<feature type="compositionally biased region" description="Polar residues" evidence="4">
    <location>
        <begin position="1302"/>
        <end position="1320"/>
    </location>
</feature>
<feature type="glycosylation site" description="N-linked (GlcNAc...) asparagine" evidence="1">
    <location>
        <position position="433"/>
    </location>
</feature>
<feature type="glycosylation site" description="N-linked (GlcNAc...) asparagine" evidence="1">
    <location>
        <position position="569"/>
    </location>
</feature>
<feature type="glycosylation site" description="N-linked (GlcNAc...) asparagine" evidence="1">
    <location>
        <position position="604"/>
    </location>
</feature>
<feature type="glycosylation site" description="N-linked (GlcNAc...) asparagine" evidence="1">
    <location>
        <position position="771"/>
    </location>
</feature>
<feature type="splice variant" id="VSP_038879" description="In isoform 2." evidence="5">
    <location>
        <begin position="1242"/>
        <end position="1297"/>
    </location>
</feature>
<feature type="sequence conflict" description="In Ref. 2; AAH30415." evidence="6" ref="2">
    <original>GPP</original>
    <variation>PRV</variation>
    <location>
        <begin position="556"/>
        <end position="558"/>
    </location>
</feature>
<feature type="sequence conflict" description="In Ref. 2; AAH30415." evidence="6" ref="2">
    <original>S</original>
    <variation>V</variation>
    <location>
        <position position="743"/>
    </location>
</feature>
<feature type="sequence conflict" description="In Ref. 2; AAH16112." evidence="6" ref="2">
    <original>T</original>
    <variation>S</variation>
    <location>
        <position position="1241"/>
    </location>
</feature>
<dbReference type="EMBL" id="AL450341">
    <property type="status" value="NOT_ANNOTATED_CDS"/>
    <property type="molecule type" value="Genomic_DNA"/>
</dbReference>
<dbReference type="EMBL" id="BX649560">
    <property type="status" value="NOT_ANNOTATED_CDS"/>
    <property type="molecule type" value="Genomic_DNA"/>
</dbReference>
<dbReference type="EMBL" id="BC016112">
    <property type="protein sequence ID" value="AAH16112.1"/>
    <property type="status" value="ALT_INIT"/>
    <property type="molecule type" value="mRNA"/>
</dbReference>
<dbReference type="EMBL" id="BC030415">
    <property type="protein sequence ID" value="AAH30415.1"/>
    <property type="molecule type" value="mRNA"/>
</dbReference>
<dbReference type="EMBL" id="AK006759">
    <property type="protein sequence ID" value="BAB24730.1"/>
    <property type="status" value="ALT_INIT"/>
    <property type="molecule type" value="mRNA"/>
</dbReference>
<dbReference type="CCDS" id="CCDS50844.1">
    <molecule id="Q923P0-1"/>
</dbReference>
<dbReference type="RefSeq" id="NP_082794.1">
    <molecule id="Q923P0-1"/>
    <property type="nucleotide sequence ID" value="NM_028518.1"/>
</dbReference>
<dbReference type="SMR" id="Q923P0"/>
<dbReference type="ComplexPortal" id="CPX-3003">
    <property type="entry name" value="Collagen type XX trimer"/>
</dbReference>
<dbReference type="FunCoup" id="Q923P0">
    <property type="interactions" value="112"/>
</dbReference>
<dbReference type="STRING" id="10090.ENSMUSP00000153871"/>
<dbReference type="GlyCosmos" id="Q923P0">
    <property type="glycosylation" value="4 sites, No reported glycans"/>
</dbReference>
<dbReference type="GlyGen" id="Q923P0">
    <property type="glycosylation" value="8 sites"/>
</dbReference>
<dbReference type="iPTMnet" id="Q923P0"/>
<dbReference type="PhosphoSitePlus" id="Q923P0"/>
<dbReference type="PaxDb" id="10090-ENSMUSP00000104484"/>
<dbReference type="ProteomicsDB" id="283786">
    <molecule id="Q923P0-1"/>
</dbReference>
<dbReference type="ProteomicsDB" id="283787">
    <molecule id="Q923P0-2"/>
</dbReference>
<dbReference type="Antibodypedia" id="29690">
    <property type="antibodies" value="192 antibodies from 27 providers"/>
</dbReference>
<dbReference type="DNASU" id="73368"/>
<dbReference type="Ensembl" id="ENSMUST00000228434.2">
    <molecule id="Q923P0-1"/>
    <property type="protein sequence ID" value="ENSMUSP00000153871.2"/>
    <property type="gene ID" value="ENSMUSG00000016356.19"/>
</dbReference>
<dbReference type="GeneID" id="73368"/>
<dbReference type="KEGG" id="mmu:73368"/>
<dbReference type="UCSC" id="uc008okp.2">
    <molecule id="Q923P0-1"/>
    <property type="organism name" value="mouse"/>
</dbReference>
<dbReference type="AGR" id="MGI:1920618"/>
<dbReference type="CTD" id="57642"/>
<dbReference type="MGI" id="MGI:1920618">
    <property type="gene designation" value="Col20a1"/>
</dbReference>
<dbReference type="VEuPathDB" id="HostDB:ENSMUSG00000016356"/>
<dbReference type="eggNOG" id="KOG3544">
    <property type="taxonomic scope" value="Eukaryota"/>
</dbReference>
<dbReference type="GeneTree" id="ENSGT00940000163709"/>
<dbReference type="HOGENOM" id="CLU_002527_0_0_1"/>
<dbReference type="InParanoid" id="Q923P0"/>
<dbReference type="OMA" id="DISGCYG"/>
<dbReference type="PhylomeDB" id="Q923P0"/>
<dbReference type="TreeFam" id="TF329914"/>
<dbReference type="Reactome" id="R-MMU-1650814">
    <property type="pathway name" value="Collagen biosynthesis and modifying enzymes"/>
</dbReference>
<dbReference type="Reactome" id="R-MMU-8948216">
    <property type="pathway name" value="Collagen chain trimerization"/>
</dbReference>
<dbReference type="BioGRID-ORCS" id="73368">
    <property type="hits" value="3 hits in 75 CRISPR screens"/>
</dbReference>
<dbReference type="ChiTaRS" id="Col20a1">
    <property type="organism name" value="mouse"/>
</dbReference>
<dbReference type="PRO" id="PR:Q923P0"/>
<dbReference type="Proteomes" id="UP000000589">
    <property type="component" value="Chromosome 2"/>
</dbReference>
<dbReference type="RNAct" id="Q923P0">
    <property type="molecule type" value="protein"/>
</dbReference>
<dbReference type="Bgee" id="ENSMUSG00000016356">
    <property type="expression patterns" value="Expressed in seminiferous tubule of testis and 142 other cell types or tissues"/>
</dbReference>
<dbReference type="ExpressionAtlas" id="Q923P0">
    <property type="expression patterns" value="baseline and differential"/>
</dbReference>
<dbReference type="GO" id="GO:0005581">
    <property type="term" value="C:collagen trimer"/>
    <property type="evidence" value="ECO:0007669"/>
    <property type="project" value="UniProtKB-KW"/>
</dbReference>
<dbReference type="GO" id="GO:0005576">
    <property type="term" value="C:extracellular region"/>
    <property type="evidence" value="ECO:0007669"/>
    <property type="project" value="UniProtKB-SubCell"/>
</dbReference>
<dbReference type="CDD" id="cd00063">
    <property type="entry name" value="FN3"/>
    <property type="match status" value="5"/>
</dbReference>
<dbReference type="CDD" id="cd01482">
    <property type="entry name" value="vWA_collagen_alphaI-XII-like"/>
    <property type="match status" value="1"/>
</dbReference>
<dbReference type="FunFam" id="2.60.40.10:FF:000974">
    <property type="entry name" value="Collagen alpha-1(XX) chain"/>
    <property type="match status" value="1"/>
</dbReference>
<dbReference type="FunFam" id="2.60.120.200:FF:000008">
    <property type="entry name" value="Collagen type XII alpha 1 chain"/>
    <property type="match status" value="1"/>
</dbReference>
<dbReference type="FunFam" id="2.60.40.10:FF:000234">
    <property type="entry name" value="Collagen, type XII, alpha 1"/>
    <property type="match status" value="2"/>
</dbReference>
<dbReference type="FunFam" id="3.40.50.410:FF:000001">
    <property type="entry name" value="Collagen, type XII, alpha 1"/>
    <property type="match status" value="1"/>
</dbReference>
<dbReference type="FunFam" id="2.60.40.10:FF:000953">
    <property type="entry name" value="Collagen, type XX, alpha 1"/>
    <property type="match status" value="1"/>
</dbReference>
<dbReference type="FunFam" id="2.60.40.10:FF:000638">
    <property type="entry name" value="von Willebrand factor A domain-containing 1"/>
    <property type="match status" value="1"/>
</dbReference>
<dbReference type="Gene3D" id="2.60.120.200">
    <property type="match status" value="1"/>
</dbReference>
<dbReference type="Gene3D" id="2.60.40.10">
    <property type="entry name" value="Immunoglobulins"/>
    <property type="match status" value="6"/>
</dbReference>
<dbReference type="Gene3D" id="3.40.50.410">
    <property type="entry name" value="von Willebrand factor, type A domain"/>
    <property type="match status" value="1"/>
</dbReference>
<dbReference type="InterPro" id="IPR008160">
    <property type="entry name" value="Collagen"/>
</dbReference>
<dbReference type="InterPro" id="IPR013320">
    <property type="entry name" value="ConA-like_dom_sf"/>
</dbReference>
<dbReference type="InterPro" id="IPR050991">
    <property type="entry name" value="ECM_Regulatory_Proteins"/>
</dbReference>
<dbReference type="InterPro" id="IPR003961">
    <property type="entry name" value="FN3_dom"/>
</dbReference>
<dbReference type="InterPro" id="IPR036116">
    <property type="entry name" value="FN3_sf"/>
</dbReference>
<dbReference type="InterPro" id="IPR013783">
    <property type="entry name" value="Ig-like_fold"/>
</dbReference>
<dbReference type="InterPro" id="IPR048287">
    <property type="entry name" value="TSPN-like_N"/>
</dbReference>
<dbReference type="InterPro" id="IPR002035">
    <property type="entry name" value="VWF_A"/>
</dbReference>
<dbReference type="InterPro" id="IPR036465">
    <property type="entry name" value="vWFA_dom_sf"/>
</dbReference>
<dbReference type="PANTHER" id="PTHR46708:SF2">
    <property type="entry name" value="FIBRONECTIN TYPE-III DOMAIN-CONTAINING PROTEIN"/>
    <property type="match status" value="1"/>
</dbReference>
<dbReference type="PANTHER" id="PTHR46708">
    <property type="entry name" value="TENASCIN"/>
    <property type="match status" value="1"/>
</dbReference>
<dbReference type="Pfam" id="PF01391">
    <property type="entry name" value="Collagen"/>
    <property type="match status" value="3"/>
</dbReference>
<dbReference type="Pfam" id="PF00041">
    <property type="entry name" value="fn3"/>
    <property type="match status" value="5"/>
</dbReference>
<dbReference type="Pfam" id="PF00092">
    <property type="entry name" value="VWA"/>
    <property type="match status" value="1"/>
</dbReference>
<dbReference type="PRINTS" id="PR00453">
    <property type="entry name" value="VWFADOMAIN"/>
</dbReference>
<dbReference type="SMART" id="SM00060">
    <property type="entry name" value="FN3"/>
    <property type="match status" value="6"/>
</dbReference>
<dbReference type="SMART" id="SM00210">
    <property type="entry name" value="TSPN"/>
    <property type="match status" value="1"/>
</dbReference>
<dbReference type="SMART" id="SM00327">
    <property type="entry name" value="VWA"/>
    <property type="match status" value="1"/>
</dbReference>
<dbReference type="SUPFAM" id="SSF49899">
    <property type="entry name" value="Concanavalin A-like lectins/glucanases"/>
    <property type="match status" value="1"/>
</dbReference>
<dbReference type="SUPFAM" id="SSF49265">
    <property type="entry name" value="Fibronectin type III"/>
    <property type="match status" value="4"/>
</dbReference>
<dbReference type="SUPFAM" id="SSF53300">
    <property type="entry name" value="vWA-like"/>
    <property type="match status" value="1"/>
</dbReference>
<dbReference type="PROSITE" id="PS50853">
    <property type="entry name" value="FN3"/>
    <property type="match status" value="6"/>
</dbReference>
<dbReference type="PROSITE" id="PS50234">
    <property type="entry name" value="VWFA"/>
    <property type="match status" value="1"/>
</dbReference>
<comment type="function">
    <text>Probable collagen protein.</text>
</comment>
<comment type="subcellular location">
    <subcellularLocation>
        <location evidence="6">Secreted</location>
        <location evidence="6">Extracellular space</location>
    </subcellularLocation>
</comment>
<comment type="alternative products">
    <event type="alternative splicing"/>
    <isoform>
        <id>Q923P0-1</id>
        <name>1</name>
        <sequence type="displayed"/>
    </isoform>
    <isoform>
        <id>Q923P0-2</id>
        <name>2</name>
        <sequence type="described" ref="VSP_038879"/>
    </isoform>
</comment>
<comment type="sequence caution" evidence="6">
    <conflict type="erroneous initiation">
        <sequence resource="EMBL-CDS" id="AAH16112"/>
    </conflict>
    <text>Truncated N-terminus.</text>
</comment>
<comment type="sequence caution" evidence="6">
    <conflict type="erroneous initiation">
        <sequence resource="EMBL-CDS" id="BAB24730"/>
    </conflict>
    <text>Truncated N-terminus.</text>
</comment>